<proteinExistence type="inferred from homology"/>
<comment type="function">
    <text evidence="3">Component of the cytochrome c oxidase, the last enzyme in the mitochondrial electron transport chain which drives oxidative phosphorylation. The respiratory chain contains 3 multisubunit complexes succinate dehydrogenase (complex II, CII), ubiquinol-cytochrome c oxidoreductase (cytochrome b-c1 complex, complex III, CIII) and cytochrome c oxidase (complex IV, CIV), that cooperate to transfer electrons derived from NADH and succinate to molecular oxygen, creating an electrochemical gradient over the inner membrane that drives transmembrane transport and the ATP synthase. Cytochrome c oxidase is the component of the respiratory chain that catalyzes the reduction of oxygen to water. Electrons originating from reduced cytochrome c in the intermembrane space (IMS) are transferred via the dinuclear copper A center (CU(A)) of subunit 2 and heme A of subunit 1 to the active site in subunit 1, a binuclear center (BNC) formed by heme A3 and copper B (CU(B)). The BNC reduces molecular oxygen to 2 water molecules using 4 electrons from cytochrome c in the IMS and 4 protons from the mitochondrial matrix.</text>
</comment>
<comment type="catalytic activity">
    <reaction evidence="3">
        <text>4 Fe(II)-[cytochrome c] + O2 + 8 H(+)(in) = 4 Fe(III)-[cytochrome c] + 2 H2O + 4 H(+)(out)</text>
        <dbReference type="Rhea" id="RHEA:11436"/>
        <dbReference type="Rhea" id="RHEA-COMP:10350"/>
        <dbReference type="Rhea" id="RHEA-COMP:14399"/>
        <dbReference type="ChEBI" id="CHEBI:15377"/>
        <dbReference type="ChEBI" id="CHEBI:15378"/>
        <dbReference type="ChEBI" id="CHEBI:15379"/>
        <dbReference type="ChEBI" id="CHEBI:29033"/>
        <dbReference type="ChEBI" id="CHEBI:29034"/>
        <dbReference type="EC" id="7.1.1.9"/>
    </reaction>
    <physiologicalReaction direction="left-to-right" evidence="3">
        <dbReference type="Rhea" id="RHEA:11437"/>
    </physiologicalReaction>
</comment>
<comment type="cofactor">
    <cofactor evidence="2">
        <name>heme</name>
        <dbReference type="ChEBI" id="CHEBI:30413"/>
    </cofactor>
    <text evidence="2">Binds 2 heme A groups non-covalently per subunit.</text>
</comment>
<comment type="cofactor">
    <cofactor evidence="2">
        <name>Cu cation</name>
        <dbReference type="ChEBI" id="CHEBI:23378"/>
    </cofactor>
    <text evidence="2">Binds a copper B center.</text>
</comment>
<comment type="pathway">
    <text evidence="3">Energy metabolism; oxidative phosphorylation.</text>
</comment>
<comment type="subunit">
    <text evidence="1 2">Component of the cytochrome c oxidase (complex IV, CIV), a multisubunit enzyme composed of 14 subunits. The complex is composed of a catalytic core of 3 subunits MT-CO1, MT-CO2 and MT-CO3, encoded in the mitochondrial DNA, and 11 supernumerary subunits COX4I, COX5A, COX5B, COX6A, COX6B, COX6C, COX7A, COX7B, COX7C, COX8 and NDUFA4, which are encoded in the nuclear genome. The complex exists as a monomer or a dimer and forms supercomplexes (SCs) in the inner mitochondrial membrane with NADH-ubiquinone oxidoreductase (complex I, CI) and ubiquinol-cytochrome c oxidoreductase (cytochrome b-c1 complex, complex III, CIII), resulting in different assemblies (supercomplex SCI(1)III(2)IV(1) and megacomplex MCI(2)III(2)IV(2)) (By similarity). As a newly synthesized protein, rapidly incorporates into a multi-subunit assembly intermediate in the inner membrane, called MITRAC (mitochondrial translation regulation assembly intermediate of cytochrome c oxidase) complex, whose core components are COA3/MITRAC12 and COX14. Within the MITRAC complex, interacts with COA3 and with SMIM20/MITRAC7; the interaction with SMIM20 stabilizes the newly synthesized MT-CO1 and prevents its premature turnover. Interacts with TMEM177 in a COX20-dependent manner (By similarity).</text>
</comment>
<comment type="subcellular location">
    <subcellularLocation>
        <location evidence="2">Mitochondrion inner membrane</location>
        <topology evidence="2">Multi-pass membrane protein</topology>
    </subcellularLocation>
</comment>
<comment type="similarity">
    <text evidence="4">Belongs to the heme-copper respiratory oxidase family.</text>
</comment>
<name>COX1_CAPHI</name>
<reference key="1">
    <citation type="submission" date="2015-05" db="EMBL/GenBank/DDBJ databases">
        <title>The complete mitochondrial genome of Liuyang black goat(Capra hircus).</title>
        <authorList>
            <person name="Chen S."/>
            <person name="Ma H."/>
            <person name="Chen G."/>
            <person name="Xu D."/>
            <person name="Wang L."/>
            <person name="Chai Y."/>
        </authorList>
    </citation>
    <scope>NUCLEOTIDE SEQUENCE [LARGE SCALE GENOMIC DNA]</scope>
    <source>
        <tissue>Muscle</tissue>
    </source>
</reference>
<reference key="2">
    <citation type="submission" date="1993-12" db="EMBL/GenBank/DDBJ databases">
        <authorList>
            <person name="Dovc P."/>
            <person name="Mann W."/>
            <person name="Hecht W."/>
        </authorList>
    </citation>
    <scope>NUCLEOTIDE SEQUENCE [GENOMIC DNA] OF 1-58</scope>
    <source>
        <tissue>Liver</tissue>
    </source>
</reference>
<evidence type="ECO:0000250" key="1">
    <source>
        <dbReference type="UniProtKB" id="P00395"/>
    </source>
</evidence>
<evidence type="ECO:0000250" key="2">
    <source>
        <dbReference type="UniProtKB" id="P00396"/>
    </source>
</evidence>
<evidence type="ECO:0000250" key="3">
    <source>
        <dbReference type="UniProtKB" id="P00401"/>
    </source>
</evidence>
<evidence type="ECO:0000305" key="4"/>
<protein>
    <recommendedName>
        <fullName>Cytochrome c oxidase subunit 1</fullName>
        <ecNumber>7.1.1.9</ecNumber>
    </recommendedName>
    <alternativeName>
        <fullName>Cytochrome c oxidase polypeptide I</fullName>
    </alternativeName>
</protein>
<feature type="chain" id="PRO_0000183302" description="Cytochrome c oxidase subunit 1">
    <location>
        <begin position="1"/>
        <end position="514"/>
    </location>
</feature>
<feature type="topological domain" description="Mitochondrial matrix" evidence="2">
    <location>
        <begin position="1"/>
        <end position="11"/>
    </location>
</feature>
<feature type="transmembrane region" description="Helical; Name=I" evidence="2">
    <location>
        <begin position="12"/>
        <end position="40"/>
    </location>
</feature>
<feature type="topological domain" description="Mitochondrial intermembrane" evidence="2">
    <location>
        <begin position="41"/>
        <end position="50"/>
    </location>
</feature>
<feature type="transmembrane region" description="Helical; Name=II" evidence="2">
    <location>
        <begin position="51"/>
        <end position="86"/>
    </location>
</feature>
<feature type="topological domain" description="Mitochondrial matrix" evidence="2">
    <location>
        <begin position="87"/>
        <end position="94"/>
    </location>
</feature>
<feature type="transmembrane region" description="Helical; Name=III" evidence="2">
    <location>
        <begin position="95"/>
        <end position="117"/>
    </location>
</feature>
<feature type="topological domain" description="Mitochondrial intermembrane" evidence="2">
    <location>
        <begin position="118"/>
        <end position="140"/>
    </location>
</feature>
<feature type="transmembrane region" description="Helical; Name=IV" evidence="2">
    <location>
        <begin position="141"/>
        <end position="170"/>
    </location>
</feature>
<feature type="topological domain" description="Mitochondrial matrix" evidence="2">
    <location>
        <begin position="171"/>
        <end position="182"/>
    </location>
</feature>
<feature type="transmembrane region" description="Helical; Name=V" evidence="2">
    <location>
        <begin position="183"/>
        <end position="212"/>
    </location>
</feature>
<feature type="topological domain" description="Mitochondrial intermembrane" evidence="2">
    <location>
        <begin position="213"/>
        <end position="227"/>
    </location>
</feature>
<feature type="transmembrane region" description="Helical; Name=VI" evidence="2">
    <location>
        <begin position="228"/>
        <end position="261"/>
    </location>
</feature>
<feature type="topological domain" description="Mitochondrial matrix" evidence="2">
    <location>
        <begin position="262"/>
        <end position="269"/>
    </location>
</feature>
<feature type="transmembrane region" description="Helical; Name=VII" evidence="2">
    <location>
        <begin position="270"/>
        <end position="286"/>
    </location>
</feature>
<feature type="topological domain" description="Mitochondrial intermembrane" evidence="2">
    <location>
        <begin position="287"/>
        <end position="298"/>
    </location>
</feature>
<feature type="transmembrane region" description="Helical; Name=VIII" evidence="2">
    <location>
        <begin position="299"/>
        <end position="327"/>
    </location>
</feature>
<feature type="topological domain" description="Mitochondrial matrix" evidence="2">
    <location>
        <begin position="328"/>
        <end position="335"/>
    </location>
</feature>
<feature type="transmembrane region" description="Helical; Name=IX" evidence="2">
    <location>
        <begin position="336"/>
        <end position="357"/>
    </location>
</feature>
<feature type="topological domain" description="Mitochondrial intermembrane" evidence="2">
    <location>
        <begin position="358"/>
        <end position="370"/>
    </location>
</feature>
<feature type="transmembrane region" description="Helical; Name=X" evidence="2">
    <location>
        <begin position="371"/>
        <end position="400"/>
    </location>
</feature>
<feature type="topological domain" description="Mitochondrial matrix" evidence="2">
    <location>
        <begin position="401"/>
        <end position="406"/>
    </location>
</feature>
<feature type="transmembrane region" description="Helical; Name=XI" evidence="2">
    <location>
        <begin position="407"/>
        <end position="433"/>
    </location>
</feature>
<feature type="topological domain" description="Mitochondrial intermembrane" evidence="2">
    <location>
        <begin position="434"/>
        <end position="446"/>
    </location>
</feature>
<feature type="transmembrane region" description="Helical; Name=XII" evidence="2">
    <location>
        <begin position="447"/>
        <end position="478"/>
    </location>
</feature>
<feature type="topological domain" description="Mitochondrial matrix" evidence="2">
    <location>
        <begin position="479"/>
        <end position="514"/>
    </location>
</feature>
<feature type="binding site" evidence="2">
    <location>
        <position position="40"/>
    </location>
    <ligand>
        <name>Na(+)</name>
        <dbReference type="ChEBI" id="CHEBI:29101"/>
    </ligand>
</feature>
<feature type="binding site" evidence="2">
    <location>
        <position position="45"/>
    </location>
    <ligand>
        <name>Na(+)</name>
        <dbReference type="ChEBI" id="CHEBI:29101"/>
    </ligand>
</feature>
<feature type="binding site" description="axial binding residue" evidence="2">
    <location>
        <position position="61"/>
    </location>
    <ligand>
        <name>Fe(II)-heme a</name>
        <dbReference type="ChEBI" id="CHEBI:61715"/>
        <note>low-spin</note>
    </ligand>
    <ligandPart>
        <name>Fe</name>
        <dbReference type="ChEBI" id="CHEBI:18248"/>
    </ligandPart>
</feature>
<feature type="binding site" evidence="2">
    <location>
        <position position="240"/>
    </location>
    <ligand>
        <name>Cu cation</name>
        <dbReference type="ChEBI" id="CHEBI:23378"/>
        <label>B</label>
    </ligand>
</feature>
<feature type="binding site" evidence="2">
    <location>
        <position position="244"/>
    </location>
    <ligand>
        <name>O2</name>
        <dbReference type="ChEBI" id="CHEBI:15379"/>
    </ligand>
</feature>
<feature type="binding site" evidence="2">
    <location>
        <position position="290"/>
    </location>
    <ligand>
        <name>Cu cation</name>
        <dbReference type="ChEBI" id="CHEBI:23378"/>
        <label>B</label>
    </ligand>
</feature>
<feature type="binding site" evidence="2">
    <location>
        <position position="291"/>
    </location>
    <ligand>
        <name>Cu cation</name>
        <dbReference type="ChEBI" id="CHEBI:23378"/>
        <label>B</label>
    </ligand>
</feature>
<feature type="binding site" evidence="2">
    <location>
        <position position="368"/>
    </location>
    <ligand>
        <name>Mg(2+)</name>
        <dbReference type="ChEBI" id="CHEBI:18420"/>
        <note>ligand shared with MT-CO2</note>
    </ligand>
</feature>
<feature type="binding site" evidence="2">
    <location>
        <position position="369"/>
    </location>
    <ligand>
        <name>Mg(2+)</name>
        <dbReference type="ChEBI" id="CHEBI:18420"/>
        <note>ligand shared with MT-CO2</note>
    </ligand>
</feature>
<feature type="binding site" description="axial binding residue" evidence="2">
    <location>
        <position position="376"/>
    </location>
    <ligand>
        <name>heme a3</name>
        <dbReference type="ChEBI" id="CHEBI:83282"/>
        <note>high-spin</note>
    </ligand>
    <ligandPart>
        <name>Fe</name>
        <dbReference type="ChEBI" id="CHEBI:18248"/>
    </ligandPart>
</feature>
<feature type="binding site" description="axial binding residue" evidence="2">
    <location>
        <position position="378"/>
    </location>
    <ligand>
        <name>Fe(II)-heme a</name>
        <dbReference type="ChEBI" id="CHEBI:61715"/>
        <note>low-spin</note>
    </ligand>
    <ligandPart>
        <name>Fe</name>
        <dbReference type="ChEBI" id="CHEBI:18248"/>
    </ligandPart>
</feature>
<feature type="binding site" evidence="2">
    <location>
        <position position="441"/>
    </location>
    <ligand>
        <name>Na(+)</name>
        <dbReference type="ChEBI" id="CHEBI:29101"/>
    </ligand>
</feature>
<feature type="cross-link" description="1'-histidyl-3'-tyrosine (His-Tyr)" evidence="2">
    <location>
        <begin position="240"/>
        <end position="244"/>
    </location>
</feature>
<accession>Q36347</accession>
<keyword id="KW-0106">Calcium</keyword>
<keyword id="KW-0186">Copper</keyword>
<keyword id="KW-0249">Electron transport</keyword>
<keyword id="KW-0349">Heme</keyword>
<keyword id="KW-0408">Iron</keyword>
<keyword id="KW-0460">Magnesium</keyword>
<keyword id="KW-0472">Membrane</keyword>
<keyword id="KW-0479">Metal-binding</keyword>
<keyword id="KW-0496">Mitochondrion</keyword>
<keyword id="KW-0999">Mitochondrion inner membrane</keyword>
<keyword id="KW-1185">Reference proteome</keyword>
<keyword id="KW-0679">Respiratory chain</keyword>
<keyword id="KW-0915">Sodium</keyword>
<keyword id="KW-1278">Translocase</keyword>
<keyword id="KW-0812">Transmembrane</keyword>
<keyword id="KW-1133">Transmembrane helix</keyword>
<keyword id="KW-0813">Transport</keyword>
<dbReference type="EC" id="7.1.1.9"/>
<dbReference type="EMBL" id="KR866125">
    <property type="protein sequence ID" value="ALP29892.1"/>
    <property type="molecule type" value="Genomic_DNA"/>
</dbReference>
<dbReference type="EMBL" id="X72965">
    <property type="protein sequence ID" value="CAA51469.1"/>
    <property type="molecule type" value="Genomic_DNA"/>
</dbReference>
<dbReference type="SMR" id="Q36347"/>
<dbReference type="STRING" id="9925.ENSCHIP00000000003"/>
<dbReference type="Ensembl" id="ENSCHIT00000000016.1">
    <property type="protein sequence ID" value="ENSCHIP00000000003.1"/>
    <property type="gene ID" value="ENSCHIG00000000016.1"/>
</dbReference>
<dbReference type="Ensembl" id="ENSCHIT00020000017">
    <property type="protein sequence ID" value="ENSCHIP00020000004"/>
    <property type="gene ID" value="ENSCHIG00020000017"/>
</dbReference>
<dbReference type="Ensembl" id="ENSCHIT00040000017">
    <property type="protein sequence ID" value="ENSCHIP00040000004"/>
    <property type="gene ID" value="ENSCHIG00040000017"/>
</dbReference>
<dbReference type="KEGG" id="chx:1485858"/>
<dbReference type="CTD" id="4512"/>
<dbReference type="GeneTree" id="ENSGT00390000001518"/>
<dbReference type="OMA" id="WAMMSIG"/>
<dbReference type="OrthoDB" id="10002679at2759"/>
<dbReference type="UniPathway" id="UPA00705"/>
<dbReference type="Proteomes" id="UP000291000">
    <property type="component" value="Unassembled WGS sequence"/>
</dbReference>
<dbReference type="Proteomes" id="UP000694566">
    <property type="component" value="Unplaced"/>
</dbReference>
<dbReference type="Bgee" id="ENSCHIG00000000016">
    <property type="expression patterns" value="Expressed in adult mammalian kidney and 17 other cell types or tissues"/>
</dbReference>
<dbReference type="GO" id="GO:0005743">
    <property type="term" value="C:mitochondrial inner membrane"/>
    <property type="evidence" value="ECO:0007669"/>
    <property type="project" value="UniProtKB-SubCell"/>
</dbReference>
<dbReference type="GO" id="GO:0045277">
    <property type="term" value="C:respiratory chain complex IV"/>
    <property type="evidence" value="ECO:0000250"/>
    <property type="project" value="UniProtKB"/>
</dbReference>
<dbReference type="GO" id="GO:0004129">
    <property type="term" value="F:cytochrome-c oxidase activity"/>
    <property type="evidence" value="ECO:0007669"/>
    <property type="project" value="UniProtKB-EC"/>
</dbReference>
<dbReference type="GO" id="GO:0020037">
    <property type="term" value="F:heme binding"/>
    <property type="evidence" value="ECO:0007669"/>
    <property type="project" value="InterPro"/>
</dbReference>
<dbReference type="GO" id="GO:0046872">
    <property type="term" value="F:metal ion binding"/>
    <property type="evidence" value="ECO:0007669"/>
    <property type="project" value="UniProtKB-KW"/>
</dbReference>
<dbReference type="GO" id="GO:0015990">
    <property type="term" value="P:electron transport coupled proton transport"/>
    <property type="evidence" value="ECO:0007669"/>
    <property type="project" value="TreeGrafter"/>
</dbReference>
<dbReference type="GO" id="GO:0006123">
    <property type="term" value="P:mitochondrial electron transport, cytochrome c to oxygen"/>
    <property type="evidence" value="ECO:0007669"/>
    <property type="project" value="TreeGrafter"/>
</dbReference>
<dbReference type="CDD" id="cd01663">
    <property type="entry name" value="Cyt_c_Oxidase_I"/>
    <property type="match status" value="1"/>
</dbReference>
<dbReference type="FunFam" id="1.20.210.10:FF:000001">
    <property type="entry name" value="Cytochrome c oxidase subunit 1"/>
    <property type="match status" value="1"/>
</dbReference>
<dbReference type="Gene3D" id="1.20.210.10">
    <property type="entry name" value="Cytochrome c oxidase-like, subunit I domain"/>
    <property type="match status" value="1"/>
</dbReference>
<dbReference type="InterPro" id="IPR023616">
    <property type="entry name" value="Cyt_c_oxase-like_su1_dom"/>
</dbReference>
<dbReference type="InterPro" id="IPR036927">
    <property type="entry name" value="Cyt_c_oxase-like_su1_sf"/>
</dbReference>
<dbReference type="InterPro" id="IPR000883">
    <property type="entry name" value="Cyt_C_Oxase_1"/>
</dbReference>
<dbReference type="InterPro" id="IPR023615">
    <property type="entry name" value="Cyt_c_Oxase_su1_BS"/>
</dbReference>
<dbReference type="InterPro" id="IPR033944">
    <property type="entry name" value="Cyt_c_oxase_su1_dom"/>
</dbReference>
<dbReference type="PANTHER" id="PTHR10422">
    <property type="entry name" value="CYTOCHROME C OXIDASE SUBUNIT 1"/>
    <property type="match status" value="1"/>
</dbReference>
<dbReference type="PANTHER" id="PTHR10422:SF18">
    <property type="entry name" value="CYTOCHROME C OXIDASE SUBUNIT 1"/>
    <property type="match status" value="1"/>
</dbReference>
<dbReference type="Pfam" id="PF00115">
    <property type="entry name" value="COX1"/>
    <property type="match status" value="1"/>
</dbReference>
<dbReference type="PRINTS" id="PR01165">
    <property type="entry name" value="CYCOXIDASEI"/>
</dbReference>
<dbReference type="SUPFAM" id="SSF81442">
    <property type="entry name" value="Cytochrome c oxidase subunit I-like"/>
    <property type="match status" value="1"/>
</dbReference>
<dbReference type="PROSITE" id="PS50855">
    <property type="entry name" value="COX1"/>
    <property type="match status" value="1"/>
</dbReference>
<dbReference type="PROSITE" id="PS00077">
    <property type="entry name" value="COX1_CUB"/>
    <property type="match status" value="1"/>
</dbReference>
<organism>
    <name type="scientific">Capra hircus</name>
    <name type="common">Goat</name>
    <dbReference type="NCBI Taxonomy" id="9925"/>
    <lineage>
        <taxon>Eukaryota</taxon>
        <taxon>Metazoa</taxon>
        <taxon>Chordata</taxon>
        <taxon>Craniata</taxon>
        <taxon>Vertebrata</taxon>
        <taxon>Euteleostomi</taxon>
        <taxon>Mammalia</taxon>
        <taxon>Eutheria</taxon>
        <taxon>Laurasiatheria</taxon>
        <taxon>Artiodactyla</taxon>
        <taxon>Ruminantia</taxon>
        <taxon>Pecora</taxon>
        <taxon>Bovidae</taxon>
        <taxon>Caprinae</taxon>
        <taxon>Capra</taxon>
    </lineage>
</organism>
<sequence>MFINRWLFSTNHKDIGTLYLLFGAWAGMVGTALSLLIRAELGQPGTLLGDDQIYNVIVTAHAFVMIFFMVMPIMIGGFGNWLVPLMIGAPDMAFPRMNNMSFWLLPPSFLLLLASSMVEAGAGTGWTVYPPLAGNLAHAGASVDLTIFSLHLAGISSILGAINFITTIINMKPPAMSQYQTPLFVWSVLITAVLLLLSLPVLAAGITMLLTDRNLNTTFFDPAGGGDPILYQHLFWFFGHPEVYILILPGFGMISHIVTYYSGKKEPFGYMGMVWAMMSIGFLGFIVWAHHMFTVGMDVDTRAYFTSATMIIAIPTGVKVFSWLATLHGGNIKWSPAMMWALGFIFLFTVGGLTGIVLANSSLDIVLHDTYYVVAHFHYVLSMGAVFAIMGGFVHWFPLFSGYTLNDTWAKIHFAIMFVGVNMTFFPQHFLGLSGMPRRYSDYPDAYTMWNTISSMGSFISLTAVMLMIFIIWEAFASKREVLTVDLTTTNLEWLNGCPPPYHTFEEPTYVSLK</sequence>
<geneLocation type="mitochondrion"/>
<gene>
    <name type="primary">MT-CO1</name>
    <name type="synonym">COI</name>
    <name type="synonym">COXI</name>
    <name type="synonym">MTCO1</name>
</gene>